<keyword id="KW-1015">Disulfide bond</keyword>
<keyword id="KW-0325">Glycoprotein</keyword>
<keyword id="KW-0458">Lysosome</keyword>
<keyword id="KW-1185">Reference proteome</keyword>
<keyword id="KW-0964">Secreted</keyword>
<keyword id="KW-0732">Signal</keyword>
<gene>
    <name evidence="7" type="primary">GILT</name>
    <name evidence="9" type="ordered locus">At4g12960</name>
    <name evidence="10" type="ORF">F25G13.50</name>
</gene>
<sequence length="233" mass="26082">MVSSSLTKLVFFGCLLLLTFTDNLVAGKSGKVKLNLYYESLCPGCQEFIVDDLGKIFDYDLYTITDLKLFPFGNAELSDNLTVTCQHGEEECKLNALEACALRTWPDQKSQYSFIRCVESDTKGWESCVKNSGREKAINDCYNGDLSRKLILGYATKTKNLKPPHEYVPWVTLNGKPLDDSVQSTDDLVAQICNAYKGKTTLPKVCNSSASMSKSPERKWKLQVSYANKATNY</sequence>
<proteinExistence type="evidence at transcript level"/>
<evidence type="ECO:0000250" key="1">
    <source>
        <dbReference type="UniProtKB" id="P13284"/>
    </source>
</evidence>
<evidence type="ECO:0000250" key="2">
    <source>
        <dbReference type="UniProtKB" id="Q5XJN2"/>
    </source>
</evidence>
<evidence type="ECO:0000255" key="3"/>
<evidence type="ECO:0000255" key="4">
    <source>
        <dbReference type="PROSITE-ProRule" id="PRU00498"/>
    </source>
</evidence>
<evidence type="ECO:0000269" key="5">
    <source>
    </source>
</evidence>
<evidence type="ECO:0000269" key="6">
    <source>
    </source>
</evidence>
<evidence type="ECO:0000303" key="7">
    <source>
    </source>
</evidence>
<evidence type="ECO:0000305" key="8"/>
<evidence type="ECO:0000312" key="9">
    <source>
        <dbReference type="Araport" id="AT4G12960"/>
    </source>
</evidence>
<evidence type="ECO:0000312" key="10">
    <source>
        <dbReference type="EMBL" id="CAB45495.1"/>
    </source>
</evidence>
<dbReference type="EMBL" id="AL079349">
    <property type="protein sequence ID" value="CAB45495.1"/>
    <property type="molecule type" value="Genomic_DNA"/>
</dbReference>
<dbReference type="EMBL" id="AL161535">
    <property type="protein sequence ID" value="CAB78338.1"/>
    <property type="molecule type" value="Genomic_DNA"/>
</dbReference>
<dbReference type="EMBL" id="CP002687">
    <property type="protein sequence ID" value="AEE83207.1"/>
    <property type="molecule type" value="Genomic_DNA"/>
</dbReference>
<dbReference type="EMBL" id="AY058119">
    <property type="protein sequence ID" value="AAL25536.1"/>
    <property type="molecule type" value="mRNA"/>
</dbReference>
<dbReference type="EMBL" id="BT000483">
    <property type="protein sequence ID" value="AAN18052.1"/>
    <property type="molecule type" value="mRNA"/>
</dbReference>
<dbReference type="EMBL" id="AY088280">
    <property type="protein sequence ID" value="AAM65819.1"/>
    <property type="molecule type" value="mRNA"/>
</dbReference>
<dbReference type="PIR" id="T10198">
    <property type="entry name" value="T10198"/>
</dbReference>
<dbReference type="RefSeq" id="NP_193032.1">
    <property type="nucleotide sequence ID" value="NM_117365.3"/>
</dbReference>
<dbReference type="SMR" id="Q9SV73"/>
<dbReference type="FunCoup" id="Q9SV73">
    <property type="interactions" value="217"/>
</dbReference>
<dbReference type="STRING" id="3702.Q9SV73"/>
<dbReference type="GlyCosmos" id="Q9SV73">
    <property type="glycosylation" value="2 sites, No reported glycans"/>
</dbReference>
<dbReference type="GlyGen" id="Q9SV73">
    <property type="glycosylation" value="2 sites"/>
</dbReference>
<dbReference type="PaxDb" id="3702-AT4G12960.2"/>
<dbReference type="ProteomicsDB" id="221894"/>
<dbReference type="EnsemblPlants" id="AT4G12960.1">
    <property type="protein sequence ID" value="AT4G12960.1"/>
    <property type="gene ID" value="AT4G12960"/>
</dbReference>
<dbReference type="GeneID" id="826908"/>
<dbReference type="Gramene" id="AT4G12960.1">
    <property type="protein sequence ID" value="AT4G12960.1"/>
    <property type="gene ID" value="AT4G12960"/>
</dbReference>
<dbReference type="KEGG" id="ath:AT4G12960"/>
<dbReference type="Araport" id="AT4G12960"/>
<dbReference type="TAIR" id="AT4G12960">
    <property type="gene designation" value="GILT"/>
</dbReference>
<dbReference type="HOGENOM" id="CLU_066886_1_1_1"/>
<dbReference type="InParanoid" id="Q9SV73"/>
<dbReference type="PhylomeDB" id="Q9SV73"/>
<dbReference type="PRO" id="PR:Q9SV73"/>
<dbReference type="Proteomes" id="UP000006548">
    <property type="component" value="Chromosome 4"/>
</dbReference>
<dbReference type="ExpressionAtlas" id="Q9SV73">
    <property type="expression patterns" value="baseline and differential"/>
</dbReference>
<dbReference type="GO" id="GO:0005576">
    <property type="term" value="C:extracellular region"/>
    <property type="evidence" value="ECO:0007669"/>
    <property type="project" value="UniProtKB-SubCell"/>
</dbReference>
<dbReference type="GO" id="GO:0005764">
    <property type="term" value="C:lysosome"/>
    <property type="evidence" value="ECO:0007669"/>
    <property type="project" value="UniProtKB-SubCell"/>
</dbReference>
<dbReference type="GO" id="GO:0016671">
    <property type="term" value="F:oxidoreductase activity, acting on a sulfur group of donors, disulfide as acceptor"/>
    <property type="evidence" value="ECO:0007669"/>
    <property type="project" value="InterPro"/>
</dbReference>
<dbReference type="InterPro" id="IPR004911">
    <property type="entry name" value="Interferon-induced_GILT"/>
</dbReference>
<dbReference type="PANTHER" id="PTHR13234:SF53">
    <property type="entry name" value="GAMMA INTERFERON RESPONSIVE LYSOSOMAL THIOL (GILT) REDUCTASE FAMILY PROTEIN-RELATED"/>
    <property type="match status" value="1"/>
</dbReference>
<dbReference type="PANTHER" id="PTHR13234">
    <property type="entry name" value="GAMMA-INTERFERON INDUCIBLE LYSOSOMAL THIOL REDUCTASE GILT"/>
    <property type="match status" value="1"/>
</dbReference>
<dbReference type="Pfam" id="PF03227">
    <property type="entry name" value="GILT"/>
    <property type="match status" value="1"/>
</dbReference>
<feature type="signal peptide" evidence="3">
    <location>
        <begin position="1"/>
        <end position="26"/>
    </location>
</feature>
<feature type="chain" id="PRO_5011951341" description="Gamma-interferon-responsive lysosomal thiol protein">
    <location>
        <begin position="27"/>
        <end position="233"/>
    </location>
</feature>
<feature type="propeptide" id="PRO_0000444149" description="Removed in mature form" evidence="1">
    <location>
        <begin position="200"/>
        <end position="233"/>
    </location>
</feature>
<feature type="glycosylation site" description="N-linked (GlcNAc...) asparagine" evidence="4">
    <location>
        <position position="80"/>
    </location>
</feature>
<feature type="glycosylation site" description="N-linked (GlcNAc...) asparagine" evidence="4">
    <location>
        <position position="207"/>
    </location>
</feature>
<feature type="disulfide bond" description="Redox-active" evidence="1">
    <location>
        <begin position="42"/>
        <end position="45"/>
    </location>
</feature>
<feature type="sequence conflict" description="In Ref. 4; AAM65819." evidence="8" ref="4">
    <original>N</original>
    <variation>K</variation>
    <location>
        <position position="194"/>
    </location>
</feature>
<feature type="sequence conflict" description="In Ref. 4; AAM65819." evidence="8" ref="4">
    <original>TT</original>
    <variation>VA</variation>
    <location>
        <begin position="200"/>
        <end position="201"/>
    </location>
</feature>
<organism>
    <name type="scientific">Arabidopsis thaliana</name>
    <name type="common">Mouse-ear cress</name>
    <dbReference type="NCBI Taxonomy" id="3702"/>
    <lineage>
        <taxon>Eukaryota</taxon>
        <taxon>Viridiplantae</taxon>
        <taxon>Streptophyta</taxon>
        <taxon>Embryophyta</taxon>
        <taxon>Tracheophyta</taxon>
        <taxon>Spermatophyta</taxon>
        <taxon>Magnoliopsida</taxon>
        <taxon>eudicotyledons</taxon>
        <taxon>Gunneridae</taxon>
        <taxon>Pentapetalae</taxon>
        <taxon>rosids</taxon>
        <taxon>malvids</taxon>
        <taxon>Brassicales</taxon>
        <taxon>Brassicaceae</taxon>
        <taxon>Camelineae</taxon>
        <taxon>Arabidopsis</taxon>
    </lineage>
</organism>
<protein>
    <recommendedName>
        <fullName evidence="7">Gamma-interferon-responsive lysosomal thiol protein</fullName>
        <shortName evidence="7">AtGILT</shortName>
    </recommendedName>
</protein>
<reference key="1">
    <citation type="journal article" date="1999" name="Nature">
        <title>Sequence and analysis of chromosome 4 of the plant Arabidopsis thaliana.</title>
        <authorList>
            <person name="Mayer K.F.X."/>
            <person name="Schueller C."/>
            <person name="Wambutt R."/>
            <person name="Murphy G."/>
            <person name="Volckaert G."/>
            <person name="Pohl T."/>
            <person name="Duesterhoeft A."/>
            <person name="Stiekema W."/>
            <person name="Entian K.-D."/>
            <person name="Terryn N."/>
            <person name="Harris B."/>
            <person name="Ansorge W."/>
            <person name="Brandt P."/>
            <person name="Grivell L.A."/>
            <person name="Rieger M."/>
            <person name="Weichselgartner M."/>
            <person name="de Simone V."/>
            <person name="Obermaier B."/>
            <person name="Mache R."/>
            <person name="Mueller M."/>
            <person name="Kreis M."/>
            <person name="Delseny M."/>
            <person name="Puigdomenech P."/>
            <person name="Watson M."/>
            <person name="Schmidtheini T."/>
            <person name="Reichert B."/>
            <person name="Portetelle D."/>
            <person name="Perez-Alonso M."/>
            <person name="Boutry M."/>
            <person name="Bancroft I."/>
            <person name="Vos P."/>
            <person name="Hoheisel J."/>
            <person name="Zimmermann W."/>
            <person name="Wedler H."/>
            <person name="Ridley P."/>
            <person name="Langham S.-A."/>
            <person name="McCullagh B."/>
            <person name="Bilham L."/>
            <person name="Robben J."/>
            <person name="van der Schueren J."/>
            <person name="Grymonprez B."/>
            <person name="Chuang Y.-J."/>
            <person name="Vandenbussche F."/>
            <person name="Braeken M."/>
            <person name="Weltjens I."/>
            <person name="Voet M."/>
            <person name="Bastiaens I."/>
            <person name="Aert R."/>
            <person name="Defoor E."/>
            <person name="Weitzenegger T."/>
            <person name="Bothe G."/>
            <person name="Ramsperger U."/>
            <person name="Hilbert H."/>
            <person name="Braun M."/>
            <person name="Holzer E."/>
            <person name="Brandt A."/>
            <person name="Peters S."/>
            <person name="van Staveren M."/>
            <person name="Dirkse W."/>
            <person name="Mooijman P."/>
            <person name="Klein Lankhorst R."/>
            <person name="Rose M."/>
            <person name="Hauf J."/>
            <person name="Koetter P."/>
            <person name="Berneiser S."/>
            <person name="Hempel S."/>
            <person name="Feldpausch M."/>
            <person name="Lamberth S."/>
            <person name="Van den Daele H."/>
            <person name="De Keyser A."/>
            <person name="Buysshaert C."/>
            <person name="Gielen J."/>
            <person name="Villarroel R."/>
            <person name="De Clercq R."/>
            <person name="van Montagu M."/>
            <person name="Rogers J."/>
            <person name="Cronin A."/>
            <person name="Quail M.A."/>
            <person name="Bray-Allen S."/>
            <person name="Clark L."/>
            <person name="Doggett J."/>
            <person name="Hall S."/>
            <person name="Kay M."/>
            <person name="Lennard N."/>
            <person name="McLay K."/>
            <person name="Mayes R."/>
            <person name="Pettett A."/>
            <person name="Rajandream M.A."/>
            <person name="Lyne M."/>
            <person name="Benes V."/>
            <person name="Rechmann S."/>
            <person name="Borkova D."/>
            <person name="Bloecker H."/>
            <person name="Scharfe M."/>
            <person name="Grimm M."/>
            <person name="Loehnert T.-H."/>
            <person name="Dose S."/>
            <person name="de Haan M."/>
            <person name="Maarse A.C."/>
            <person name="Schaefer M."/>
            <person name="Mueller-Auer S."/>
            <person name="Gabel C."/>
            <person name="Fuchs M."/>
            <person name="Fartmann B."/>
            <person name="Granderath K."/>
            <person name="Dauner D."/>
            <person name="Herzl A."/>
            <person name="Neumann S."/>
            <person name="Argiriou A."/>
            <person name="Vitale D."/>
            <person name="Liguori R."/>
            <person name="Piravandi E."/>
            <person name="Massenet O."/>
            <person name="Quigley F."/>
            <person name="Clabauld G."/>
            <person name="Muendlein A."/>
            <person name="Felber R."/>
            <person name="Schnabl S."/>
            <person name="Hiller R."/>
            <person name="Schmidt W."/>
            <person name="Lecharny A."/>
            <person name="Aubourg S."/>
            <person name="Chefdor F."/>
            <person name="Cooke R."/>
            <person name="Berger C."/>
            <person name="Monfort A."/>
            <person name="Casacuberta E."/>
            <person name="Gibbons T."/>
            <person name="Weber N."/>
            <person name="Vandenbol M."/>
            <person name="Bargues M."/>
            <person name="Terol J."/>
            <person name="Torres A."/>
            <person name="Perez-Perez A."/>
            <person name="Purnelle B."/>
            <person name="Bent E."/>
            <person name="Johnson S."/>
            <person name="Tacon D."/>
            <person name="Jesse T."/>
            <person name="Heijnen L."/>
            <person name="Schwarz S."/>
            <person name="Scholler P."/>
            <person name="Heber S."/>
            <person name="Francs P."/>
            <person name="Bielke C."/>
            <person name="Frishman D."/>
            <person name="Haase D."/>
            <person name="Lemcke K."/>
            <person name="Mewes H.-W."/>
            <person name="Stocker S."/>
            <person name="Zaccaria P."/>
            <person name="Bevan M."/>
            <person name="Wilson R.K."/>
            <person name="de la Bastide M."/>
            <person name="Habermann K."/>
            <person name="Parnell L."/>
            <person name="Dedhia N."/>
            <person name="Gnoj L."/>
            <person name="Schutz K."/>
            <person name="Huang E."/>
            <person name="Spiegel L."/>
            <person name="Sekhon M."/>
            <person name="Murray J."/>
            <person name="Sheet P."/>
            <person name="Cordes M."/>
            <person name="Abu-Threideh J."/>
            <person name="Stoneking T."/>
            <person name="Kalicki J."/>
            <person name="Graves T."/>
            <person name="Harmon G."/>
            <person name="Edwards J."/>
            <person name="Latreille P."/>
            <person name="Courtney L."/>
            <person name="Cloud J."/>
            <person name="Abbott A."/>
            <person name="Scott K."/>
            <person name="Johnson D."/>
            <person name="Minx P."/>
            <person name="Bentley D."/>
            <person name="Fulton B."/>
            <person name="Miller N."/>
            <person name="Greco T."/>
            <person name="Kemp K."/>
            <person name="Kramer J."/>
            <person name="Fulton L."/>
            <person name="Mardis E."/>
            <person name="Dante M."/>
            <person name="Pepin K."/>
            <person name="Hillier L.W."/>
            <person name="Nelson J."/>
            <person name="Spieth J."/>
            <person name="Ryan E."/>
            <person name="Andrews S."/>
            <person name="Geisel C."/>
            <person name="Layman D."/>
            <person name="Du H."/>
            <person name="Ali J."/>
            <person name="Berghoff A."/>
            <person name="Jones K."/>
            <person name="Drone K."/>
            <person name="Cotton M."/>
            <person name="Joshu C."/>
            <person name="Antonoiu B."/>
            <person name="Zidanic M."/>
            <person name="Strong C."/>
            <person name="Sun H."/>
            <person name="Lamar B."/>
            <person name="Yordan C."/>
            <person name="Ma P."/>
            <person name="Zhong J."/>
            <person name="Preston R."/>
            <person name="Vil D."/>
            <person name="Shekher M."/>
            <person name="Matero A."/>
            <person name="Shah R."/>
            <person name="Swaby I.K."/>
            <person name="O'Shaughnessy A."/>
            <person name="Rodriguez M."/>
            <person name="Hoffman J."/>
            <person name="Till S."/>
            <person name="Granat S."/>
            <person name="Shohdy N."/>
            <person name="Hasegawa A."/>
            <person name="Hameed A."/>
            <person name="Lodhi M."/>
            <person name="Johnson A."/>
            <person name="Chen E."/>
            <person name="Marra M.A."/>
            <person name="Martienssen R."/>
            <person name="McCombie W.R."/>
        </authorList>
    </citation>
    <scope>NUCLEOTIDE SEQUENCE [LARGE SCALE GENOMIC DNA]</scope>
    <source>
        <strain>cv. Columbia</strain>
    </source>
</reference>
<reference key="2">
    <citation type="journal article" date="2017" name="Plant J.">
        <title>Araport11: a complete reannotation of the Arabidopsis thaliana reference genome.</title>
        <authorList>
            <person name="Cheng C.Y."/>
            <person name="Krishnakumar V."/>
            <person name="Chan A.P."/>
            <person name="Thibaud-Nissen F."/>
            <person name="Schobel S."/>
            <person name="Town C.D."/>
        </authorList>
    </citation>
    <scope>GENOME REANNOTATION</scope>
    <source>
        <strain>cv. Columbia</strain>
    </source>
</reference>
<reference key="3">
    <citation type="journal article" date="2003" name="Science">
        <title>Empirical analysis of transcriptional activity in the Arabidopsis genome.</title>
        <authorList>
            <person name="Yamada K."/>
            <person name="Lim J."/>
            <person name="Dale J.M."/>
            <person name="Chen H."/>
            <person name="Shinn P."/>
            <person name="Palm C.J."/>
            <person name="Southwick A.M."/>
            <person name="Wu H.C."/>
            <person name="Kim C.J."/>
            <person name="Nguyen M."/>
            <person name="Pham P.K."/>
            <person name="Cheuk R.F."/>
            <person name="Karlin-Newmann G."/>
            <person name="Liu S.X."/>
            <person name="Lam B."/>
            <person name="Sakano H."/>
            <person name="Wu T."/>
            <person name="Yu G."/>
            <person name="Miranda M."/>
            <person name="Quach H.L."/>
            <person name="Tripp M."/>
            <person name="Chang C.H."/>
            <person name="Lee J.M."/>
            <person name="Toriumi M.J."/>
            <person name="Chan M.M."/>
            <person name="Tang C.C."/>
            <person name="Onodera C.S."/>
            <person name="Deng J.M."/>
            <person name="Akiyama K."/>
            <person name="Ansari Y."/>
            <person name="Arakawa T."/>
            <person name="Banh J."/>
            <person name="Banno F."/>
            <person name="Bowser L."/>
            <person name="Brooks S.Y."/>
            <person name="Carninci P."/>
            <person name="Chao Q."/>
            <person name="Choy N."/>
            <person name="Enju A."/>
            <person name="Goldsmith A.D."/>
            <person name="Gurjal M."/>
            <person name="Hansen N.F."/>
            <person name="Hayashizaki Y."/>
            <person name="Johnson-Hopson C."/>
            <person name="Hsuan V.W."/>
            <person name="Iida K."/>
            <person name="Karnes M."/>
            <person name="Khan S."/>
            <person name="Koesema E."/>
            <person name="Ishida J."/>
            <person name="Jiang P.X."/>
            <person name="Jones T."/>
            <person name="Kawai J."/>
            <person name="Kamiya A."/>
            <person name="Meyers C."/>
            <person name="Nakajima M."/>
            <person name="Narusaka M."/>
            <person name="Seki M."/>
            <person name="Sakurai T."/>
            <person name="Satou M."/>
            <person name="Tamse R."/>
            <person name="Vaysberg M."/>
            <person name="Wallender E.K."/>
            <person name="Wong C."/>
            <person name="Yamamura Y."/>
            <person name="Yuan S."/>
            <person name="Shinozaki K."/>
            <person name="Davis R.W."/>
            <person name="Theologis A."/>
            <person name="Ecker J.R."/>
        </authorList>
    </citation>
    <scope>NUCLEOTIDE SEQUENCE [LARGE SCALE MRNA]</scope>
    <source>
        <strain>cv. Columbia</strain>
    </source>
</reference>
<reference key="4">
    <citation type="submission" date="2002-03" db="EMBL/GenBank/DDBJ databases">
        <title>Full-length cDNA from Arabidopsis thaliana.</title>
        <authorList>
            <person name="Brover V.V."/>
            <person name="Troukhan M.E."/>
            <person name="Alexandrov N.A."/>
            <person name="Lu Y.-P."/>
            <person name="Flavell R.B."/>
            <person name="Feldmann K.A."/>
        </authorList>
    </citation>
    <scope>NUCLEOTIDE SEQUENCE [LARGE SCALE MRNA]</scope>
</reference>
<reference key="5">
    <citation type="journal article" date="2006" name="Plant Biotechnol. J.">
        <title>Proliferative phase endosperm promoters from Arabidopsis thaliana.</title>
        <authorList>
            <person name="Tiwari S."/>
            <person name="Spielman M."/>
            <person name="Day R.C."/>
            <person name="Scott R.J."/>
        </authorList>
    </citation>
    <scope>TISSUE SPECIFICITY</scope>
</reference>
<reference key="6">
    <citation type="journal article" date="2011" name="Plant Cell Rep.">
        <title>A seed coat outer integument-specific promoter for Brassica napus.</title>
        <authorList>
            <person name="Wu L."/>
            <person name="El-Mezawy A."/>
            <person name="Shah S."/>
        </authorList>
    </citation>
    <scope>TISSUE SPECIFICITY</scope>
</reference>
<accession>Q9SV73</accession>
<accession>Q8L9R1</accession>
<comment type="function">
    <text evidence="2">Lysosomal thiol reductase that can reduce protein disulfide bonds. May facilitate the complete unfolding of proteins destined for lysosomal degradation.</text>
</comment>
<comment type="subunit">
    <text evidence="1">Dimer; disulfide-linked.</text>
</comment>
<comment type="subcellular location">
    <subcellularLocation>
        <location evidence="1">Secreted</location>
    </subcellularLocation>
    <subcellularLocation>
        <location evidence="1">Lysosome</location>
    </subcellularLocation>
</comment>
<comment type="tissue specificity">
    <text evidence="5 6">Expressed in the outer integument of seed coat.</text>
</comment>
<comment type="similarity">
    <text evidence="8">Belongs to the GILT family.</text>
</comment>
<name>GILT_ARATH</name>